<organismHost>
    <name type="scientific">Homo sapiens</name>
    <name type="common">Human</name>
    <dbReference type="NCBI Taxonomy" id="9606"/>
</organismHost>
<sequence length="488" mass="56645">MDLDQISETLSSVAEEEPLTMFLLDKLYAIREKIKQVPFSIVRLCHVYCMLIKYNASNNNCILGRKLIEEMQQFLCGTRVDGSEDISMDLSELCKLYDYCPLLCSALCRAPCVSVNKLFKIVERETRGQSENPLWHALRKYTVTATKLYDIYTTRCFLEYKGQQFFGEAVIYGAKHERVIRHLVATFYVKREVKETLGLLLDPSSGVFGASLDACFGISFNEDGFLMVKEKALIFEIKFKYKYLRDKEDHFVSELLKNPTEKSFSDFILSHPVPVIEFRERGKIPSSREYLMTYDFQYRPQRKLRTCPTPAILAPHIKQLLCLNETQKSTVIVFDCKSDLCEQKLSVFQKAVFTVNVFVNPKHRYFFQSLLQQYVMTQFYINDHNNPEYIESTEVPSVHIVTAFFRRRTEEERSLHLVIDETEYIEEEIPLALIVTPVAPNPEFTCCVITDICNLWENNICKQTSLQVWAQSAVNQYLAACVRKPKTP</sequence>
<protein>
    <recommendedName>
        <fullName evidence="1">Alkaline nuclease</fullName>
        <ecNumber evidence="1">3.1.-.-</ecNumber>
    </recommendedName>
</protein>
<name>AN_HHV6U</name>
<comment type="function">
    <text evidence="1">Plays a role in processing non linear or branched viral DNA intermediates in order to promote the production of mature packaged unit-length linear progeny viral DNA molecules. Exhibits endonuclease and exonuclease activities and accepts both double-stranded and single-stranded DNA as substrate. Exonuclease digestion of DNA is in the 5'-&gt; 3' direction and the products are 5'-monophosphate nucleosides. Additionally, forms a recombinase with the major DNA-binding protein, which displays strand exchange activity.</text>
</comment>
<comment type="subunit">
    <text evidence="1">Interacts with major DNA-binding protein; this interaction increases the nuclease processivity of the alkaline exonuclease.</text>
</comment>
<comment type="subcellular location">
    <subcellularLocation>
        <location evidence="1">Host nucleus</location>
    </subcellularLocation>
    <subcellularLocation>
        <location evidence="1">Host cytoplasm</location>
    </subcellularLocation>
</comment>
<comment type="similarity">
    <text evidence="1">Belongs to the herpesviridae alkaline nuclease family.</text>
</comment>
<accession>P24447</accession>
<proteinExistence type="inferred from homology"/>
<organism>
    <name type="scientific">Human herpesvirus 6A (strain Uganda-1102)</name>
    <name type="common">HHV-6 variant A</name>
    <name type="synonym">Human B lymphotropic virus</name>
    <dbReference type="NCBI Taxonomy" id="10370"/>
    <lineage>
        <taxon>Viruses</taxon>
        <taxon>Duplodnaviria</taxon>
        <taxon>Heunggongvirae</taxon>
        <taxon>Peploviricota</taxon>
        <taxon>Herviviricetes</taxon>
        <taxon>Herpesvirales</taxon>
        <taxon>Orthoherpesviridae</taxon>
        <taxon>Betaherpesvirinae</taxon>
        <taxon>Roseolovirus</taxon>
        <taxon>Roseolovirus humanbeta6a</taxon>
        <taxon>Human betaherpesvirus 6A</taxon>
    </lineage>
</organism>
<gene>
    <name type="primary">U70</name>
    <name type="synonym">16R</name>
</gene>
<reference key="1">
    <citation type="journal article" date="1990" name="J. Virol.">
        <title>Human herpesvirus 6 is closely related to human cytomegalovirus.</title>
        <authorList>
            <person name="Lawrence G.L."/>
            <person name="Chee M."/>
            <person name="Craxton M.A."/>
            <person name="Gompels U.A."/>
            <person name="Honess R.W."/>
            <person name="Barrell B.G."/>
        </authorList>
    </citation>
    <scope>NUCLEOTIDE SEQUENCE [GENOMIC DNA]</scope>
</reference>
<reference key="2">
    <citation type="journal article" date="1995" name="Virology">
        <title>The DNA sequence of human herpesvirus-6: structure, coding content, and genome evolution.</title>
        <authorList>
            <person name="Gompels U.A."/>
            <person name="Nicholas J."/>
            <person name="Lawrence G.L."/>
            <person name="Jones M."/>
            <person name="Thomson B.J."/>
            <person name="Martin M.E.D."/>
            <person name="Efstathiou S."/>
            <person name="Craxton M.A."/>
            <person name="Macaulay H.A."/>
        </authorList>
    </citation>
    <scope>NUCLEOTIDE SEQUENCE [LARGE SCALE GENOMIC DNA]</scope>
</reference>
<feature type="chain" id="PRO_0000115694" description="Alkaline nuclease">
    <location>
        <begin position="1"/>
        <end position="488"/>
    </location>
</feature>
<feature type="site" description="Required for function" evidence="1">
    <location>
        <position position="177"/>
    </location>
</feature>
<feature type="site" description="Required for function" evidence="1">
    <location>
        <position position="213"/>
    </location>
</feature>
<feature type="site" description="Required for function" evidence="1">
    <location>
        <position position="236"/>
    </location>
</feature>
<feature type="site" description="Required for function" evidence="1">
    <location>
        <position position="238"/>
    </location>
</feature>
<dbReference type="EC" id="3.1.-.-" evidence="1"/>
<dbReference type="EMBL" id="X83413">
    <property type="protein sequence ID" value="CAA58362.1"/>
    <property type="molecule type" value="Genomic_DNA"/>
</dbReference>
<dbReference type="EMBL" id="M68963">
    <property type="protein sequence ID" value="AAA65578.1"/>
    <property type="molecule type" value="Genomic_DNA"/>
</dbReference>
<dbReference type="PIR" id="F36769">
    <property type="entry name" value="QQBEHS"/>
</dbReference>
<dbReference type="RefSeq" id="NP_042963.1">
    <property type="nucleotide sequence ID" value="NC_001664.2"/>
</dbReference>
<dbReference type="SMR" id="P24447"/>
<dbReference type="GeneID" id="1487951"/>
<dbReference type="KEGG" id="vg:1487951"/>
<dbReference type="Proteomes" id="UP000009295">
    <property type="component" value="Segment"/>
</dbReference>
<dbReference type="GO" id="GO:0030430">
    <property type="term" value="C:host cell cytoplasm"/>
    <property type="evidence" value="ECO:0007669"/>
    <property type="project" value="UniProtKB-SubCell"/>
</dbReference>
<dbReference type="GO" id="GO:0042025">
    <property type="term" value="C:host cell nucleus"/>
    <property type="evidence" value="ECO:0007669"/>
    <property type="project" value="UniProtKB-SubCell"/>
</dbReference>
<dbReference type="GO" id="GO:0003677">
    <property type="term" value="F:DNA binding"/>
    <property type="evidence" value="ECO:0007669"/>
    <property type="project" value="InterPro"/>
</dbReference>
<dbReference type="GO" id="GO:0004519">
    <property type="term" value="F:endonuclease activity"/>
    <property type="evidence" value="ECO:0007669"/>
    <property type="project" value="UniProtKB-KW"/>
</dbReference>
<dbReference type="GO" id="GO:0004527">
    <property type="term" value="F:exonuclease activity"/>
    <property type="evidence" value="ECO:0007669"/>
    <property type="project" value="UniProtKB-KW"/>
</dbReference>
<dbReference type="Gene3D" id="3.90.320.10">
    <property type="match status" value="1"/>
</dbReference>
<dbReference type="HAMAP" id="MF_04009">
    <property type="entry name" value="HSV_AN"/>
    <property type="match status" value="1"/>
</dbReference>
<dbReference type="InterPro" id="IPR001616">
    <property type="entry name" value="Herpes_alk_exo"/>
</dbReference>
<dbReference type="InterPro" id="IPR011604">
    <property type="entry name" value="PDDEXK-like_dom_sf"/>
</dbReference>
<dbReference type="InterPro" id="IPR011335">
    <property type="entry name" value="Restrct_endonuc-II-like"/>
</dbReference>
<dbReference type="InterPro" id="IPR034720">
    <property type="entry name" value="Viral_alk_exo"/>
</dbReference>
<dbReference type="Pfam" id="PF01771">
    <property type="entry name" value="Viral_alk_exo"/>
    <property type="match status" value="1"/>
</dbReference>
<dbReference type="PRINTS" id="PR00924">
    <property type="entry name" value="ALKEXNUCLASE"/>
</dbReference>
<dbReference type="SUPFAM" id="SSF52980">
    <property type="entry name" value="Restriction endonuclease-like"/>
    <property type="match status" value="1"/>
</dbReference>
<evidence type="ECO:0000255" key="1">
    <source>
        <dbReference type="HAMAP-Rule" id="MF_04009"/>
    </source>
</evidence>
<keyword id="KW-0255">Endonuclease</keyword>
<keyword id="KW-0269">Exonuclease</keyword>
<keyword id="KW-1035">Host cytoplasm</keyword>
<keyword id="KW-1048">Host nucleus</keyword>
<keyword id="KW-0945">Host-virus interaction</keyword>
<keyword id="KW-0378">Hydrolase</keyword>
<keyword id="KW-0540">Nuclease</keyword>
<keyword id="KW-1185">Reference proteome</keyword>